<gene>
    <name type="primary">ppc</name>
    <name type="ordered locus">CE1703</name>
</gene>
<accession>Q8RQL3</accession>
<organism>
    <name type="scientific">Corynebacterium efficiens (strain DSM 44549 / YS-314 / AJ 12310 / JCM 11189 / NBRC 100395)</name>
    <dbReference type="NCBI Taxonomy" id="196164"/>
    <lineage>
        <taxon>Bacteria</taxon>
        <taxon>Bacillati</taxon>
        <taxon>Actinomycetota</taxon>
        <taxon>Actinomycetes</taxon>
        <taxon>Mycobacteriales</taxon>
        <taxon>Corynebacteriaceae</taxon>
        <taxon>Corynebacterium</taxon>
    </lineage>
</organism>
<comment type="function">
    <text evidence="1">Forms oxaloacetate, a four-carbon dicarboxylic acid source for the tricarboxylic acid cycle.</text>
</comment>
<comment type="catalytic activity">
    <reaction>
        <text>oxaloacetate + phosphate = phosphoenolpyruvate + hydrogencarbonate</text>
        <dbReference type="Rhea" id="RHEA:28370"/>
        <dbReference type="ChEBI" id="CHEBI:16452"/>
        <dbReference type="ChEBI" id="CHEBI:17544"/>
        <dbReference type="ChEBI" id="CHEBI:43474"/>
        <dbReference type="ChEBI" id="CHEBI:58702"/>
        <dbReference type="EC" id="4.1.1.31"/>
    </reaction>
</comment>
<comment type="cofactor">
    <cofactor evidence="1">
        <name>Mg(2+)</name>
        <dbReference type="ChEBI" id="CHEBI:18420"/>
    </cofactor>
</comment>
<comment type="similarity">
    <text evidence="2">Belongs to the PEPCase type 1 family.</text>
</comment>
<name>CAPP_COREF</name>
<evidence type="ECO:0000250" key="1"/>
<evidence type="ECO:0000305" key="2"/>
<keyword id="KW-0120">Carbon dioxide fixation</keyword>
<keyword id="KW-0456">Lyase</keyword>
<keyword id="KW-0460">Magnesium</keyword>
<keyword id="KW-1185">Reference proteome</keyword>
<protein>
    <recommendedName>
        <fullName>Phosphoenolpyruvate carboxylase</fullName>
        <shortName>PEPC</shortName>
        <shortName>PEPCase</shortName>
        <ecNumber>4.1.1.31</ecNumber>
    </recommendedName>
</protein>
<dbReference type="EC" id="4.1.1.31"/>
<dbReference type="EMBL" id="AB083298">
    <property type="protein sequence ID" value="BAB88902.1"/>
    <property type="molecule type" value="Genomic_DNA"/>
</dbReference>
<dbReference type="EMBL" id="BA000035">
    <property type="protein sequence ID" value="BAC18513.1"/>
    <property type="molecule type" value="Genomic_DNA"/>
</dbReference>
<dbReference type="RefSeq" id="WP_006767704.1">
    <property type="nucleotide sequence ID" value="NC_004369.1"/>
</dbReference>
<dbReference type="SMR" id="Q8RQL3"/>
<dbReference type="STRING" id="196164.gene:10742124"/>
<dbReference type="KEGG" id="cef:CE1703"/>
<dbReference type="eggNOG" id="COG2352">
    <property type="taxonomic scope" value="Bacteria"/>
</dbReference>
<dbReference type="HOGENOM" id="CLU_006557_2_0_11"/>
<dbReference type="OrthoDB" id="9768133at2"/>
<dbReference type="Proteomes" id="UP000001409">
    <property type="component" value="Chromosome"/>
</dbReference>
<dbReference type="GO" id="GO:0005829">
    <property type="term" value="C:cytosol"/>
    <property type="evidence" value="ECO:0007669"/>
    <property type="project" value="TreeGrafter"/>
</dbReference>
<dbReference type="GO" id="GO:0000287">
    <property type="term" value="F:magnesium ion binding"/>
    <property type="evidence" value="ECO:0007669"/>
    <property type="project" value="UniProtKB-UniRule"/>
</dbReference>
<dbReference type="GO" id="GO:0008964">
    <property type="term" value="F:phosphoenolpyruvate carboxylase activity"/>
    <property type="evidence" value="ECO:0007669"/>
    <property type="project" value="UniProtKB-UniRule"/>
</dbReference>
<dbReference type="GO" id="GO:0015977">
    <property type="term" value="P:carbon fixation"/>
    <property type="evidence" value="ECO:0007669"/>
    <property type="project" value="UniProtKB-UniRule"/>
</dbReference>
<dbReference type="GO" id="GO:0006107">
    <property type="term" value="P:oxaloacetate metabolic process"/>
    <property type="evidence" value="ECO:0007669"/>
    <property type="project" value="UniProtKB-UniRule"/>
</dbReference>
<dbReference type="GO" id="GO:0006099">
    <property type="term" value="P:tricarboxylic acid cycle"/>
    <property type="evidence" value="ECO:0007669"/>
    <property type="project" value="InterPro"/>
</dbReference>
<dbReference type="Gene3D" id="1.20.1440.90">
    <property type="entry name" value="Phosphoenolpyruvate/pyruvate domain"/>
    <property type="match status" value="1"/>
</dbReference>
<dbReference type="HAMAP" id="MF_00595">
    <property type="entry name" value="PEPcase_type1"/>
    <property type="match status" value="1"/>
</dbReference>
<dbReference type="InterPro" id="IPR021135">
    <property type="entry name" value="PEP_COase"/>
</dbReference>
<dbReference type="InterPro" id="IPR022805">
    <property type="entry name" value="PEP_COase_bac/pln-type"/>
</dbReference>
<dbReference type="InterPro" id="IPR018129">
    <property type="entry name" value="PEP_COase_Lys_AS"/>
</dbReference>
<dbReference type="InterPro" id="IPR033129">
    <property type="entry name" value="PEPCASE_His_AS"/>
</dbReference>
<dbReference type="InterPro" id="IPR015813">
    <property type="entry name" value="Pyrv/PenolPyrv_kinase-like_dom"/>
</dbReference>
<dbReference type="NCBIfam" id="NF000584">
    <property type="entry name" value="PRK00009.1"/>
    <property type="match status" value="1"/>
</dbReference>
<dbReference type="PANTHER" id="PTHR30523">
    <property type="entry name" value="PHOSPHOENOLPYRUVATE CARBOXYLASE"/>
    <property type="match status" value="1"/>
</dbReference>
<dbReference type="PANTHER" id="PTHR30523:SF6">
    <property type="entry name" value="PHOSPHOENOLPYRUVATE CARBOXYLASE"/>
    <property type="match status" value="1"/>
</dbReference>
<dbReference type="Pfam" id="PF00311">
    <property type="entry name" value="PEPcase"/>
    <property type="match status" value="1"/>
</dbReference>
<dbReference type="PRINTS" id="PR00150">
    <property type="entry name" value="PEPCARBXLASE"/>
</dbReference>
<dbReference type="SUPFAM" id="SSF51621">
    <property type="entry name" value="Phosphoenolpyruvate/pyruvate domain"/>
    <property type="match status" value="1"/>
</dbReference>
<dbReference type="PROSITE" id="PS00781">
    <property type="entry name" value="PEPCASE_1"/>
    <property type="match status" value="1"/>
</dbReference>
<dbReference type="PROSITE" id="PS00393">
    <property type="entry name" value="PEPCASE_2"/>
    <property type="match status" value="1"/>
</dbReference>
<sequence>MNELLRDDIRYLGRILGEVISEQEGHHVFELVERARRTSFDIAKGRAEMDSLVEVFAGIDPEDATPVARAFTHFALLANLAEDLHDAAQREQALNSGEPAPDSTLEATWVKLDDAGVGSGEVAAVIRNALVAPVLTAHPTETRRRTVFDAQKHITALMEERHLLLALPTHARTQSKLDDIERNIRRRITILWQTALIRVARPRIEDEVEVGLRYYKLSLLAEIPRINHDVTVELARRFGGDIPTTAMVRPGSWIGGDHDGNPFVTAETVTYATHRAAETVLKYYVKQLHALEHELSLSDRMNVISDELRVLADAGQNDMPSRVDEPYRRAIHGMRGRMLATTAALIGEEAVEGTWFKTFTPYTDTHEFKRDLDIVDGSLRMSRDDIIADDRLAMLRSALDSFGFNLYSLDLRQNSDGFEDVLTELFATAQTEKNYRGLTEAEKLDLLIRELSTPRPLIPHGDPDYSEATNRELGIFSKAAEAVRKFGPLMVPHCIISMASSVTDILEPMVLLKEFGLIRANGKNPTGSVDVIPLFETIDDLQRGAGILEELWDIDLYRNYLEQRDNVQEVMLGYSDSNKDGGYFAANWALYDAELRLVELCRGRNVKLRLFHGRGGTVGRGGGPSYDAILAQPKGAVRGAVRVTEQGEIISAKYGNPDTARRNLEALVSATLEASLLDDVELPNRERAHQIMGEISELSFRRYSSLVHEDPGFIQYFTQSTPLQEIGSLNIGSRPSSRKQTNTVEDLRAIPWVLSWSQSRVMLPGWFGVGTALREWIGEGEGAAERIAELQELNRCWPFFTSVLDNMAQVMSKAELRLARLYADLIPDREVADRIYETIFGEYFLTKEMFCTITGSQDLLDDNPALARSVRSRFPYLLPLNVIQVEMMRRYRSGDEGTAVPRNIRLTMNGLSTALRNSG</sequence>
<reference key="1">
    <citation type="submission" date="2002-04" db="EMBL/GenBank/DDBJ databases">
        <title>Corynebacterium efficiens ppc gene for phosphoenolpyruvate carboxylase, complete CDS.</title>
        <authorList>
            <person name="Akiyoshi N."/>
            <person name="Nonaka G."/>
            <person name="Kimura E."/>
            <person name="Kawahara Y."/>
            <person name="Sugimoto S."/>
        </authorList>
    </citation>
    <scope>NUCLEOTIDE SEQUENCE [GENOMIC DNA]</scope>
    <source>
        <strain>DSM 44549 / YS-314 / AJ 12310 / JCM 11189 / NBRC 100395</strain>
    </source>
</reference>
<reference key="2">
    <citation type="journal article" date="2003" name="Genome Res.">
        <title>Comparative complete genome sequence analysis of the amino acid replacements responsible for the thermostability of Corynebacterium efficiens.</title>
        <authorList>
            <person name="Nishio Y."/>
            <person name="Nakamura Y."/>
            <person name="Kawarabayasi Y."/>
            <person name="Usuda Y."/>
            <person name="Kimura E."/>
            <person name="Sugimoto S."/>
            <person name="Matsui K."/>
            <person name="Yamagishi A."/>
            <person name="Kikuchi H."/>
            <person name="Ikeo K."/>
            <person name="Gojobori T."/>
        </authorList>
    </citation>
    <scope>NUCLEOTIDE SEQUENCE [LARGE SCALE GENOMIC DNA]</scope>
    <source>
        <strain>DSM 44549 / YS-314 / AJ 12310 / JCM 11189 / NBRC 100395</strain>
    </source>
</reference>
<proteinExistence type="inferred from homology"/>
<feature type="chain" id="PRO_0000166590" description="Phosphoenolpyruvate carboxylase">
    <location>
        <begin position="1"/>
        <end position="919"/>
    </location>
</feature>
<feature type="active site" evidence="1">
    <location>
        <position position="138"/>
    </location>
</feature>
<feature type="active site" evidence="1">
    <location>
        <position position="579"/>
    </location>
</feature>